<reference key="1">
    <citation type="journal article" date="2006" name="Proc. Natl. Acad. Sci. U.S.A.">
        <title>Comparative genomics of the lactic acid bacteria.</title>
        <authorList>
            <person name="Makarova K.S."/>
            <person name="Slesarev A."/>
            <person name="Wolf Y.I."/>
            <person name="Sorokin A."/>
            <person name="Mirkin B."/>
            <person name="Koonin E.V."/>
            <person name="Pavlov A."/>
            <person name="Pavlova N."/>
            <person name="Karamychev V."/>
            <person name="Polouchine N."/>
            <person name="Shakhova V."/>
            <person name="Grigoriev I."/>
            <person name="Lou Y."/>
            <person name="Rohksar D."/>
            <person name="Lucas S."/>
            <person name="Huang K."/>
            <person name="Goodstein D.M."/>
            <person name="Hawkins T."/>
            <person name="Plengvidhya V."/>
            <person name="Welker D."/>
            <person name="Hughes J."/>
            <person name="Goh Y."/>
            <person name="Benson A."/>
            <person name="Baldwin K."/>
            <person name="Lee J.-H."/>
            <person name="Diaz-Muniz I."/>
            <person name="Dosti B."/>
            <person name="Smeianov V."/>
            <person name="Wechter W."/>
            <person name="Barabote R."/>
            <person name="Lorca G."/>
            <person name="Altermann E."/>
            <person name="Barrangou R."/>
            <person name="Ganesan B."/>
            <person name="Xie Y."/>
            <person name="Rawsthorne H."/>
            <person name="Tamir D."/>
            <person name="Parker C."/>
            <person name="Breidt F."/>
            <person name="Broadbent J.R."/>
            <person name="Hutkins R."/>
            <person name="O'Sullivan D."/>
            <person name="Steele J."/>
            <person name="Unlu G."/>
            <person name="Saier M.H. Jr."/>
            <person name="Klaenhammer T."/>
            <person name="Richardson P."/>
            <person name="Kozyavkin S."/>
            <person name="Weimer B.C."/>
            <person name="Mills D.A."/>
        </authorList>
    </citation>
    <scope>NUCLEOTIDE SEQUENCE [LARGE SCALE GENOMIC DNA]</scope>
    <source>
        <strain>ATCC 367 / BCRC 12310 / CIP 105137 / JCM 1170 / LMG 11437 / NCIMB 947 / NCTC 947</strain>
    </source>
</reference>
<protein>
    <recommendedName>
        <fullName evidence="1">Small ribosomal subunit protein uS14B</fullName>
    </recommendedName>
    <alternativeName>
        <fullName evidence="2">30S ribosomal protein S14 type Z</fullName>
    </alternativeName>
</protein>
<name>RS14Z_LEVBA</name>
<proteinExistence type="inferred from homology"/>
<evidence type="ECO:0000255" key="1">
    <source>
        <dbReference type="HAMAP-Rule" id="MF_01364"/>
    </source>
</evidence>
<evidence type="ECO:0000305" key="2"/>
<gene>
    <name evidence="1" type="primary">rpsZ</name>
    <name evidence="1" type="synonym">rpsN</name>
    <name type="ordered locus">LVIS_1677</name>
</gene>
<sequence length="61" mass="7104">MAKKSQIAKNKRPAKFSTQAYTRCERCGRPHSVYQKFHLCRICLRELAHKGQIPGMKKASW</sequence>
<comment type="function">
    <text evidence="1">Binds 16S rRNA, required for the assembly of 30S particles and may also be responsible for determining the conformation of the 16S rRNA at the A site.</text>
</comment>
<comment type="cofactor">
    <cofactor evidence="1">
        <name>Zn(2+)</name>
        <dbReference type="ChEBI" id="CHEBI:29105"/>
    </cofactor>
    <text evidence="1">Binds 1 zinc ion per subunit.</text>
</comment>
<comment type="subunit">
    <text evidence="1">Part of the 30S ribosomal subunit. Contacts proteins S3 and S10.</text>
</comment>
<comment type="similarity">
    <text evidence="1">Belongs to the universal ribosomal protein uS14 family. Zinc-binding uS14 subfamily.</text>
</comment>
<keyword id="KW-0479">Metal-binding</keyword>
<keyword id="KW-1185">Reference proteome</keyword>
<keyword id="KW-0687">Ribonucleoprotein</keyword>
<keyword id="KW-0689">Ribosomal protein</keyword>
<keyword id="KW-0694">RNA-binding</keyword>
<keyword id="KW-0699">rRNA-binding</keyword>
<keyword id="KW-0862">Zinc</keyword>
<feature type="chain" id="PRO_1000067942" description="Small ribosomal subunit protein uS14B">
    <location>
        <begin position="1"/>
        <end position="61"/>
    </location>
</feature>
<feature type="binding site" evidence="1">
    <location>
        <position position="24"/>
    </location>
    <ligand>
        <name>Zn(2+)</name>
        <dbReference type="ChEBI" id="CHEBI:29105"/>
    </ligand>
</feature>
<feature type="binding site" evidence="1">
    <location>
        <position position="27"/>
    </location>
    <ligand>
        <name>Zn(2+)</name>
        <dbReference type="ChEBI" id="CHEBI:29105"/>
    </ligand>
</feature>
<feature type="binding site" evidence="1">
    <location>
        <position position="40"/>
    </location>
    <ligand>
        <name>Zn(2+)</name>
        <dbReference type="ChEBI" id="CHEBI:29105"/>
    </ligand>
</feature>
<feature type="binding site" evidence="1">
    <location>
        <position position="43"/>
    </location>
    <ligand>
        <name>Zn(2+)</name>
        <dbReference type="ChEBI" id="CHEBI:29105"/>
    </ligand>
</feature>
<dbReference type="EMBL" id="CP000416">
    <property type="protein sequence ID" value="ABJ64752.1"/>
    <property type="molecule type" value="Genomic_DNA"/>
</dbReference>
<dbReference type="RefSeq" id="WP_011668486.1">
    <property type="nucleotide sequence ID" value="NC_008497.1"/>
</dbReference>
<dbReference type="SMR" id="Q03PX0"/>
<dbReference type="STRING" id="387344.LVIS_1677"/>
<dbReference type="KEGG" id="lbr:LVIS_1677"/>
<dbReference type="eggNOG" id="COG0199">
    <property type="taxonomic scope" value="Bacteria"/>
</dbReference>
<dbReference type="HOGENOM" id="CLU_139869_3_0_9"/>
<dbReference type="Proteomes" id="UP000001652">
    <property type="component" value="Chromosome"/>
</dbReference>
<dbReference type="GO" id="GO:0015935">
    <property type="term" value="C:small ribosomal subunit"/>
    <property type="evidence" value="ECO:0007669"/>
    <property type="project" value="TreeGrafter"/>
</dbReference>
<dbReference type="GO" id="GO:0019843">
    <property type="term" value="F:rRNA binding"/>
    <property type="evidence" value="ECO:0007669"/>
    <property type="project" value="UniProtKB-UniRule"/>
</dbReference>
<dbReference type="GO" id="GO:0003735">
    <property type="term" value="F:structural constituent of ribosome"/>
    <property type="evidence" value="ECO:0007669"/>
    <property type="project" value="InterPro"/>
</dbReference>
<dbReference type="GO" id="GO:0008270">
    <property type="term" value="F:zinc ion binding"/>
    <property type="evidence" value="ECO:0007669"/>
    <property type="project" value="UniProtKB-UniRule"/>
</dbReference>
<dbReference type="GO" id="GO:0006412">
    <property type="term" value="P:translation"/>
    <property type="evidence" value="ECO:0007669"/>
    <property type="project" value="UniProtKB-UniRule"/>
</dbReference>
<dbReference type="FunFam" id="4.10.830.10:FF:000001">
    <property type="entry name" value="30S ribosomal protein S14 type Z"/>
    <property type="match status" value="1"/>
</dbReference>
<dbReference type="Gene3D" id="4.10.830.10">
    <property type="entry name" value="30s Ribosomal Protein S14, Chain N"/>
    <property type="match status" value="1"/>
</dbReference>
<dbReference type="HAMAP" id="MF_01364_B">
    <property type="entry name" value="Ribosomal_uS14_2_B"/>
    <property type="match status" value="1"/>
</dbReference>
<dbReference type="InterPro" id="IPR001209">
    <property type="entry name" value="Ribosomal_uS14"/>
</dbReference>
<dbReference type="InterPro" id="IPR023053">
    <property type="entry name" value="Ribosomal_uS14_bact"/>
</dbReference>
<dbReference type="InterPro" id="IPR018271">
    <property type="entry name" value="Ribosomal_uS14_CS"/>
</dbReference>
<dbReference type="InterPro" id="IPR043140">
    <property type="entry name" value="Ribosomal_uS14_sf"/>
</dbReference>
<dbReference type="NCBIfam" id="NF005974">
    <property type="entry name" value="PRK08061.1"/>
    <property type="match status" value="1"/>
</dbReference>
<dbReference type="PANTHER" id="PTHR19836">
    <property type="entry name" value="30S RIBOSOMAL PROTEIN S14"/>
    <property type="match status" value="1"/>
</dbReference>
<dbReference type="PANTHER" id="PTHR19836:SF26">
    <property type="entry name" value="SMALL RIBOSOMAL SUBUNIT PROTEIN US14B"/>
    <property type="match status" value="1"/>
</dbReference>
<dbReference type="Pfam" id="PF00253">
    <property type="entry name" value="Ribosomal_S14"/>
    <property type="match status" value="1"/>
</dbReference>
<dbReference type="SUPFAM" id="SSF57716">
    <property type="entry name" value="Glucocorticoid receptor-like (DNA-binding domain)"/>
    <property type="match status" value="1"/>
</dbReference>
<dbReference type="PROSITE" id="PS00527">
    <property type="entry name" value="RIBOSOMAL_S14"/>
    <property type="match status" value="1"/>
</dbReference>
<organism>
    <name type="scientific">Levilactobacillus brevis (strain ATCC 367 / BCRC 12310 / CIP 105137 / JCM 1170 / LMG 11437 / NCIMB 947 / NCTC 947)</name>
    <name type="common">Lactobacillus brevis</name>
    <dbReference type="NCBI Taxonomy" id="387344"/>
    <lineage>
        <taxon>Bacteria</taxon>
        <taxon>Bacillati</taxon>
        <taxon>Bacillota</taxon>
        <taxon>Bacilli</taxon>
        <taxon>Lactobacillales</taxon>
        <taxon>Lactobacillaceae</taxon>
        <taxon>Levilactobacillus</taxon>
    </lineage>
</organism>
<accession>Q03PX0</accession>